<dbReference type="EMBL" id="CP000687">
    <property type="protein sequence ID" value="ABY70578.1"/>
    <property type="molecule type" value="Genomic_DNA"/>
</dbReference>
<dbReference type="RefSeq" id="WP_005599788.1">
    <property type="nucleotide sequence ID" value="NC_010278.1"/>
</dbReference>
<dbReference type="SMR" id="B0BU11"/>
<dbReference type="GeneID" id="48600287"/>
<dbReference type="KEGG" id="apj:APJL_2033"/>
<dbReference type="HOGENOM" id="CLU_086034_5_1_6"/>
<dbReference type="Proteomes" id="UP000008547">
    <property type="component" value="Chromosome"/>
</dbReference>
<dbReference type="GO" id="GO:0033281">
    <property type="term" value="C:TAT protein transport complex"/>
    <property type="evidence" value="ECO:0007669"/>
    <property type="project" value="UniProtKB-UniRule"/>
</dbReference>
<dbReference type="GO" id="GO:0008320">
    <property type="term" value="F:protein transmembrane transporter activity"/>
    <property type="evidence" value="ECO:0007669"/>
    <property type="project" value="UniProtKB-UniRule"/>
</dbReference>
<dbReference type="GO" id="GO:0043953">
    <property type="term" value="P:protein transport by the Tat complex"/>
    <property type="evidence" value="ECO:0007669"/>
    <property type="project" value="UniProtKB-UniRule"/>
</dbReference>
<dbReference type="Gene3D" id="1.20.5.3310">
    <property type="match status" value="1"/>
</dbReference>
<dbReference type="HAMAP" id="MF_00236">
    <property type="entry name" value="TatA_E"/>
    <property type="match status" value="1"/>
</dbReference>
<dbReference type="InterPro" id="IPR003369">
    <property type="entry name" value="TatA/B/E"/>
</dbReference>
<dbReference type="InterPro" id="IPR006312">
    <property type="entry name" value="TatA/E"/>
</dbReference>
<dbReference type="NCBIfam" id="NF002500">
    <property type="entry name" value="PRK01833.1"/>
    <property type="match status" value="1"/>
</dbReference>
<dbReference type="NCBIfam" id="TIGR01411">
    <property type="entry name" value="tatAE"/>
    <property type="match status" value="1"/>
</dbReference>
<dbReference type="PANTHER" id="PTHR42982">
    <property type="entry name" value="SEC-INDEPENDENT PROTEIN TRANSLOCASE PROTEIN TATA"/>
    <property type="match status" value="1"/>
</dbReference>
<dbReference type="PANTHER" id="PTHR42982:SF1">
    <property type="entry name" value="SEC-INDEPENDENT PROTEIN TRANSLOCASE PROTEIN TATA"/>
    <property type="match status" value="1"/>
</dbReference>
<dbReference type="Pfam" id="PF02416">
    <property type="entry name" value="TatA_B_E"/>
    <property type="match status" value="1"/>
</dbReference>
<keyword id="KW-0997">Cell inner membrane</keyword>
<keyword id="KW-1003">Cell membrane</keyword>
<keyword id="KW-0472">Membrane</keyword>
<keyword id="KW-0653">Protein transport</keyword>
<keyword id="KW-0811">Translocation</keyword>
<keyword id="KW-0812">Transmembrane</keyword>
<keyword id="KW-1133">Transmembrane helix</keyword>
<keyword id="KW-0813">Transport</keyword>
<evidence type="ECO:0000255" key="1">
    <source>
        <dbReference type="HAMAP-Rule" id="MF_00236"/>
    </source>
</evidence>
<evidence type="ECO:0000256" key="2">
    <source>
        <dbReference type="SAM" id="MobiDB-lite"/>
    </source>
</evidence>
<organism>
    <name type="scientific">Actinobacillus pleuropneumoniae serotype 3 (strain JL03)</name>
    <dbReference type="NCBI Taxonomy" id="434271"/>
    <lineage>
        <taxon>Bacteria</taxon>
        <taxon>Pseudomonadati</taxon>
        <taxon>Pseudomonadota</taxon>
        <taxon>Gammaproteobacteria</taxon>
        <taxon>Pasteurellales</taxon>
        <taxon>Pasteurellaceae</taxon>
        <taxon>Actinobacillus</taxon>
    </lineage>
</organism>
<sequence length="76" mass="8266">MGGISIWQLLIIVAIIVLLFGTKKLRTLGTDLGESVKGFKKAMADDKSQPQDASFEKVEAKEAASTEQKAKEKEQA</sequence>
<name>TATA_ACTPJ</name>
<reference key="1">
    <citation type="journal article" date="2008" name="PLoS ONE">
        <title>Genome biology of Actinobacillus pleuropneumoniae JL03, an isolate of serotype 3 prevalent in China.</title>
        <authorList>
            <person name="Xu Z."/>
            <person name="Zhou Y."/>
            <person name="Li L."/>
            <person name="Zhou R."/>
            <person name="Xiao S."/>
            <person name="Wan Y."/>
            <person name="Zhang S."/>
            <person name="Wang K."/>
            <person name="Li W."/>
            <person name="Li L."/>
            <person name="Jin H."/>
            <person name="Kang M."/>
            <person name="Dalai B."/>
            <person name="Li T."/>
            <person name="Liu L."/>
            <person name="Cheng Y."/>
            <person name="Zhang L."/>
            <person name="Xu T."/>
            <person name="Zheng H."/>
            <person name="Pu S."/>
            <person name="Wang B."/>
            <person name="Gu W."/>
            <person name="Zhang X.L."/>
            <person name="Zhu G.-F."/>
            <person name="Wang S."/>
            <person name="Zhao G.-P."/>
            <person name="Chen H."/>
        </authorList>
    </citation>
    <scope>NUCLEOTIDE SEQUENCE [LARGE SCALE GENOMIC DNA]</scope>
    <source>
        <strain>JL03</strain>
    </source>
</reference>
<comment type="function">
    <text evidence="1">Part of the twin-arginine translocation (Tat) system that transports large folded proteins containing a characteristic twin-arginine motif in their signal peptide across membranes. TatA could form the protein-conducting channel of the Tat system.</text>
</comment>
<comment type="subunit">
    <text evidence="1">The Tat system comprises two distinct complexes: a TatABC complex, containing multiple copies of TatA, TatB and TatC subunits, and a separate TatA complex, containing only TatA subunits. Substrates initially bind to the TatABC complex, which probably triggers association of the separate TatA complex to form the active translocon.</text>
</comment>
<comment type="subcellular location">
    <subcellularLocation>
        <location evidence="1">Cell inner membrane</location>
        <topology evidence="1">Single-pass membrane protein</topology>
    </subcellularLocation>
</comment>
<comment type="similarity">
    <text evidence="1">Belongs to the TatA/E family.</text>
</comment>
<protein>
    <recommendedName>
        <fullName evidence="1">Sec-independent protein translocase protein TatA</fullName>
    </recommendedName>
</protein>
<accession>B0BU11</accession>
<feature type="chain" id="PRO_1000125179" description="Sec-independent protein translocase protein TatA">
    <location>
        <begin position="1"/>
        <end position="76"/>
    </location>
</feature>
<feature type="transmembrane region" description="Helical" evidence="1">
    <location>
        <begin position="1"/>
        <end position="21"/>
    </location>
</feature>
<feature type="region of interest" description="Disordered" evidence="2">
    <location>
        <begin position="43"/>
        <end position="76"/>
    </location>
</feature>
<proteinExistence type="inferred from homology"/>
<gene>
    <name evidence="1" type="primary">tatA</name>
    <name type="ordered locus">APJL_2033</name>
</gene>